<name>TRNP1_HUMAN</name>
<dbReference type="EMBL" id="AL356390">
    <property type="status" value="NOT_ANNOTATED_CDS"/>
    <property type="molecule type" value="Genomic_DNA"/>
</dbReference>
<dbReference type="EMBL" id="BC069216">
    <property type="protein sequence ID" value="AAH69216.1"/>
    <property type="molecule type" value="mRNA"/>
</dbReference>
<dbReference type="CCDS" id="CCDS41289.1"/>
<dbReference type="RefSeq" id="NP_001013664.2">
    <property type="nucleotide sequence ID" value="NM_001013642.3"/>
</dbReference>
<dbReference type="RefSeq" id="XP_005245924.1">
    <property type="nucleotide sequence ID" value="XM_005245867.4"/>
</dbReference>
<dbReference type="SMR" id="Q6NT89"/>
<dbReference type="BioGRID" id="132770">
    <property type="interactions" value="7"/>
</dbReference>
<dbReference type="FunCoup" id="Q6NT89">
    <property type="interactions" value="481"/>
</dbReference>
<dbReference type="IntAct" id="Q6NT89">
    <property type="interactions" value="2"/>
</dbReference>
<dbReference type="STRING" id="9606.ENSP00000429216"/>
<dbReference type="GlyGen" id="Q6NT89">
    <property type="glycosylation" value="3 sites"/>
</dbReference>
<dbReference type="iPTMnet" id="Q6NT89"/>
<dbReference type="PhosphoSitePlus" id="Q6NT89"/>
<dbReference type="BioMuta" id="TRNP1"/>
<dbReference type="DMDM" id="224471860"/>
<dbReference type="jPOST" id="Q6NT89"/>
<dbReference type="MassIVE" id="Q6NT89"/>
<dbReference type="PaxDb" id="9606-ENSP00000429216"/>
<dbReference type="PeptideAtlas" id="Q6NT89"/>
<dbReference type="ProteomicsDB" id="66667"/>
<dbReference type="Antibodypedia" id="68540">
    <property type="antibodies" value="30 antibodies from 8 providers"/>
</dbReference>
<dbReference type="DNASU" id="388610"/>
<dbReference type="Ensembl" id="ENST00000522111.3">
    <property type="protein sequence ID" value="ENSP00000429216.2"/>
    <property type="gene ID" value="ENSG00000253368.5"/>
</dbReference>
<dbReference type="Ensembl" id="ENST00000531285.2">
    <property type="protein sequence ID" value="ENSP00000436467.2"/>
    <property type="gene ID" value="ENSG00000253368.5"/>
</dbReference>
<dbReference type="GeneID" id="388610"/>
<dbReference type="KEGG" id="hsa:388610"/>
<dbReference type="MANE-Select" id="ENST00000522111.3">
    <property type="protein sequence ID" value="ENSP00000429216.2"/>
    <property type="RefSeq nucleotide sequence ID" value="NM_001013642.3"/>
    <property type="RefSeq protein sequence ID" value="NP_001013664.2"/>
</dbReference>
<dbReference type="UCSC" id="uc001bnj.5">
    <property type="organism name" value="human"/>
</dbReference>
<dbReference type="AGR" id="HGNC:34348"/>
<dbReference type="CTD" id="388610"/>
<dbReference type="DisGeNET" id="388610"/>
<dbReference type="GeneCards" id="TRNP1"/>
<dbReference type="HGNC" id="HGNC:34348">
    <property type="gene designation" value="TRNP1"/>
</dbReference>
<dbReference type="HPA" id="ENSG00000253368">
    <property type="expression patterns" value="Tissue enhanced (esophagus, retina, stomach)"/>
</dbReference>
<dbReference type="neXtProt" id="NX_Q6NT89"/>
<dbReference type="OpenTargets" id="ENSG00000253368"/>
<dbReference type="PharmGKB" id="PA164727311"/>
<dbReference type="VEuPathDB" id="HostDB:ENSG00000253368"/>
<dbReference type="eggNOG" id="ENOG502S7AN">
    <property type="taxonomic scope" value="Eukaryota"/>
</dbReference>
<dbReference type="GeneTree" id="ENSGT00390000017418"/>
<dbReference type="HOGENOM" id="CLU_106336_0_0_1"/>
<dbReference type="InParanoid" id="Q6NT89"/>
<dbReference type="OMA" id="IACGAQQ"/>
<dbReference type="OrthoDB" id="9909452at2759"/>
<dbReference type="PAN-GO" id="Q6NT89">
    <property type="GO annotations" value="1 GO annotation based on evolutionary models"/>
</dbReference>
<dbReference type="PhylomeDB" id="Q6NT89"/>
<dbReference type="TreeFam" id="TF338814"/>
<dbReference type="PathwayCommons" id="Q6NT89"/>
<dbReference type="SignaLink" id="Q6NT89"/>
<dbReference type="BioGRID-ORCS" id="388610">
    <property type="hits" value="70 hits in 1152 CRISPR screens"/>
</dbReference>
<dbReference type="GenomeRNAi" id="388610"/>
<dbReference type="Pharos" id="Q6NT89">
    <property type="development level" value="Tdark"/>
</dbReference>
<dbReference type="PRO" id="PR:Q6NT89"/>
<dbReference type="Proteomes" id="UP000005640">
    <property type="component" value="Chromosome 1"/>
</dbReference>
<dbReference type="RNAct" id="Q6NT89">
    <property type="molecule type" value="protein"/>
</dbReference>
<dbReference type="Bgee" id="ENSG00000253368">
    <property type="expression patterns" value="Expressed in cardiac muscle of right atrium and 173 other cell types or tissues"/>
</dbReference>
<dbReference type="ExpressionAtlas" id="Q6NT89">
    <property type="expression patterns" value="baseline and differential"/>
</dbReference>
<dbReference type="GO" id="GO:0000791">
    <property type="term" value="C:euchromatin"/>
    <property type="evidence" value="ECO:0007669"/>
    <property type="project" value="Ensembl"/>
</dbReference>
<dbReference type="GO" id="GO:0005634">
    <property type="term" value="C:nucleus"/>
    <property type="evidence" value="ECO:0000250"/>
    <property type="project" value="UniProtKB"/>
</dbReference>
<dbReference type="GO" id="GO:0003677">
    <property type="term" value="F:DNA binding"/>
    <property type="evidence" value="ECO:0000250"/>
    <property type="project" value="UniProtKB"/>
</dbReference>
<dbReference type="GO" id="GO:0021696">
    <property type="term" value="P:cerebellar cortex morphogenesis"/>
    <property type="evidence" value="ECO:0000250"/>
    <property type="project" value="UniProtKB"/>
</dbReference>
<dbReference type="GO" id="GO:0061351">
    <property type="term" value="P:neural precursor cell proliferation"/>
    <property type="evidence" value="ECO:0000250"/>
    <property type="project" value="UniProtKB"/>
</dbReference>
<dbReference type="GO" id="GO:0051726">
    <property type="term" value="P:regulation of cell cycle"/>
    <property type="evidence" value="ECO:0000250"/>
    <property type="project" value="UniProtKB"/>
</dbReference>
<dbReference type="GO" id="GO:0042127">
    <property type="term" value="P:regulation of cell population proliferation"/>
    <property type="evidence" value="ECO:0000250"/>
    <property type="project" value="UniProtKB"/>
</dbReference>
<dbReference type="InterPro" id="IPR040266">
    <property type="entry name" value="TRNP1"/>
</dbReference>
<dbReference type="PANTHER" id="PTHR40714">
    <property type="entry name" value="TMF-REGULATED NUCLEAR PROTEIN 1"/>
    <property type="match status" value="1"/>
</dbReference>
<dbReference type="PANTHER" id="PTHR40714:SF1">
    <property type="entry name" value="TMF-REGULATED NUCLEAR PROTEIN 1"/>
    <property type="match status" value="1"/>
</dbReference>
<evidence type="ECO:0000250" key="1"/>
<evidence type="ECO:0000256" key="2">
    <source>
        <dbReference type="SAM" id="MobiDB-lite"/>
    </source>
</evidence>
<evidence type="ECO:0000269" key="3">
    <source>
    </source>
</evidence>
<evidence type="ECO:0000269" key="4">
    <source>
    </source>
</evidence>
<proteinExistence type="evidence at protein level"/>
<feature type="chain" id="PRO_0000336088" description="TMF-regulated nuclear protein 1">
    <location>
        <begin position="1"/>
        <end position="227"/>
    </location>
</feature>
<feature type="region of interest" description="Disordered" evidence="2">
    <location>
        <begin position="1"/>
        <end position="72"/>
    </location>
</feature>
<feature type="region of interest" description="Disordered" evidence="2">
    <location>
        <begin position="200"/>
        <end position="227"/>
    </location>
</feature>
<feature type="compositionally biased region" description="Pro residues" evidence="2">
    <location>
        <begin position="22"/>
        <end position="55"/>
    </location>
</feature>
<feature type="sequence variant" id="VAR_043545" description="In dbSNP:rs6689941." evidence="3">
    <original>W</original>
    <variation>R</variation>
    <location>
        <position position="27"/>
    </location>
</feature>
<comment type="function">
    <text evidence="1">DNA-binding factor that regulates the expression of a subset of genes and plays a key role in tangential, radial, and lateral expansion of the brain neocortex. Regulates neural stem cells proliferation and the production of intermediate neural progenitors and basal radial glial cells affecting the process of cerebral cortex gyrification. May control the proliferation rate of cells by regulating their progression through key cell-cycle transition points (By similarity).</text>
</comment>
<comment type="subunit">
    <text evidence="1">Interacts with TMF1; may regulate TRNP1 proteasomal degradation.</text>
</comment>
<comment type="subcellular location">
    <subcellularLocation>
        <location evidence="1">Nucleus</location>
    </subcellularLocation>
</comment>
<comment type="developmental stage">
    <text evidence="4">Expression is detected in the ventricular zone and neuronal layers of the developing cerebral cortex at 12, 18 and 21 gestation weeks. Differences in regional expression seem to correlate with the process of gyrification of the cortex. Highly expressed in germinal layers of the precentral and parahippocampal gyri, that exhibit little radial expansion and folding, and weakly expressed in germinal layers of the occipital and temporal lobes, that undergo greater expansion and folding.</text>
</comment>
<comment type="PTM">
    <text evidence="1">Ubiquitinated, leading to its degradation by the proteasome.</text>
</comment>
<comment type="online information" name="Protein Spotlight">
    <link uri="https://www.proteinspotlight.org/back_issues/152/"/>
    <text>the geometry of intelligence - Issue 152 of August 2013</text>
</comment>
<sequence>MPGCRISACGPGAQEGTAEQRSPPPPWDPMPSSQPPPPTPTLTPTPTPGQSPPLPDAAGASAGAAEDQELQRWRQGASGIAGLAGPGGGSGAAAGAGGRALELAEARRRLLEVEGRRRLVSELESRVLQLHRVFLAAELRLAHRAESLSRLSGGVAQAELYLAAHGSRLKKGPRRGRRGRPPALLASALGLGGCVPWGAGRLRRGHGPEPDSPFRRSPPRGPASPQR</sequence>
<accession>Q6NT89</accession>
<organism>
    <name type="scientific">Homo sapiens</name>
    <name type="common">Human</name>
    <dbReference type="NCBI Taxonomy" id="9606"/>
    <lineage>
        <taxon>Eukaryota</taxon>
        <taxon>Metazoa</taxon>
        <taxon>Chordata</taxon>
        <taxon>Craniata</taxon>
        <taxon>Vertebrata</taxon>
        <taxon>Euteleostomi</taxon>
        <taxon>Mammalia</taxon>
        <taxon>Eutheria</taxon>
        <taxon>Euarchontoglires</taxon>
        <taxon>Primates</taxon>
        <taxon>Haplorrhini</taxon>
        <taxon>Catarrhini</taxon>
        <taxon>Hominidae</taxon>
        <taxon>Homo</taxon>
    </lineage>
</organism>
<gene>
    <name type="primary">TRNP1</name>
    <name type="synonym">C1orf225</name>
    <name type="synonym">TRNP</name>
</gene>
<keyword id="KW-0131">Cell cycle</keyword>
<keyword id="KW-0217">Developmental protein</keyword>
<keyword id="KW-0238">DNA-binding</keyword>
<keyword id="KW-0524">Neurogenesis</keyword>
<keyword id="KW-0539">Nucleus</keyword>
<keyword id="KW-1267">Proteomics identification</keyword>
<keyword id="KW-1185">Reference proteome</keyword>
<keyword id="KW-0804">Transcription</keyword>
<keyword id="KW-0805">Transcription regulation</keyword>
<keyword id="KW-0832">Ubl conjugation</keyword>
<protein>
    <recommendedName>
        <fullName>TMF-regulated nuclear protein 1</fullName>
    </recommendedName>
</protein>
<reference key="1">
    <citation type="journal article" date="2006" name="Nature">
        <title>The DNA sequence and biological annotation of human chromosome 1.</title>
        <authorList>
            <person name="Gregory S.G."/>
            <person name="Barlow K.F."/>
            <person name="McLay K.E."/>
            <person name="Kaul R."/>
            <person name="Swarbreck D."/>
            <person name="Dunham A."/>
            <person name="Scott C.E."/>
            <person name="Howe K.L."/>
            <person name="Woodfine K."/>
            <person name="Spencer C.C.A."/>
            <person name="Jones M.C."/>
            <person name="Gillson C."/>
            <person name="Searle S."/>
            <person name="Zhou Y."/>
            <person name="Kokocinski F."/>
            <person name="McDonald L."/>
            <person name="Evans R."/>
            <person name="Phillips K."/>
            <person name="Atkinson A."/>
            <person name="Cooper R."/>
            <person name="Jones C."/>
            <person name="Hall R.E."/>
            <person name="Andrews T.D."/>
            <person name="Lloyd C."/>
            <person name="Ainscough R."/>
            <person name="Almeida J.P."/>
            <person name="Ambrose K.D."/>
            <person name="Anderson F."/>
            <person name="Andrew R.W."/>
            <person name="Ashwell R.I.S."/>
            <person name="Aubin K."/>
            <person name="Babbage A.K."/>
            <person name="Bagguley C.L."/>
            <person name="Bailey J."/>
            <person name="Beasley H."/>
            <person name="Bethel G."/>
            <person name="Bird C.P."/>
            <person name="Bray-Allen S."/>
            <person name="Brown J.Y."/>
            <person name="Brown A.J."/>
            <person name="Buckley D."/>
            <person name="Burton J."/>
            <person name="Bye J."/>
            <person name="Carder C."/>
            <person name="Chapman J.C."/>
            <person name="Clark S.Y."/>
            <person name="Clarke G."/>
            <person name="Clee C."/>
            <person name="Cobley V."/>
            <person name="Collier R.E."/>
            <person name="Corby N."/>
            <person name="Coville G.J."/>
            <person name="Davies J."/>
            <person name="Deadman R."/>
            <person name="Dunn M."/>
            <person name="Earthrowl M."/>
            <person name="Ellington A.G."/>
            <person name="Errington H."/>
            <person name="Frankish A."/>
            <person name="Frankland J."/>
            <person name="French L."/>
            <person name="Garner P."/>
            <person name="Garnett J."/>
            <person name="Gay L."/>
            <person name="Ghori M.R.J."/>
            <person name="Gibson R."/>
            <person name="Gilby L.M."/>
            <person name="Gillett W."/>
            <person name="Glithero R.J."/>
            <person name="Grafham D.V."/>
            <person name="Griffiths C."/>
            <person name="Griffiths-Jones S."/>
            <person name="Grocock R."/>
            <person name="Hammond S."/>
            <person name="Harrison E.S.I."/>
            <person name="Hart E."/>
            <person name="Haugen E."/>
            <person name="Heath P.D."/>
            <person name="Holmes S."/>
            <person name="Holt K."/>
            <person name="Howden P.J."/>
            <person name="Hunt A.R."/>
            <person name="Hunt S.E."/>
            <person name="Hunter G."/>
            <person name="Isherwood J."/>
            <person name="James R."/>
            <person name="Johnson C."/>
            <person name="Johnson D."/>
            <person name="Joy A."/>
            <person name="Kay M."/>
            <person name="Kershaw J.K."/>
            <person name="Kibukawa M."/>
            <person name="Kimberley A.M."/>
            <person name="King A."/>
            <person name="Knights A.J."/>
            <person name="Lad H."/>
            <person name="Laird G."/>
            <person name="Lawlor S."/>
            <person name="Leongamornlert D.A."/>
            <person name="Lloyd D.M."/>
            <person name="Loveland J."/>
            <person name="Lovell J."/>
            <person name="Lush M.J."/>
            <person name="Lyne R."/>
            <person name="Martin S."/>
            <person name="Mashreghi-Mohammadi M."/>
            <person name="Matthews L."/>
            <person name="Matthews N.S.W."/>
            <person name="McLaren S."/>
            <person name="Milne S."/>
            <person name="Mistry S."/>
            <person name="Moore M.J.F."/>
            <person name="Nickerson T."/>
            <person name="O'Dell C.N."/>
            <person name="Oliver K."/>
            <person name="Palmeiri A."/>
            <person name="Palmer S.A."/>
            <person name="Parker A."/>
            <person name="Patel D."/>
            <person name="Pearce A.V."/>
            <person name="Peck A.I."/>
            <person name="Pelan S."/>
            <person name="Phelps K."/>
            <person name="Phillimore B.J."/>
            <person name="Plumb R."/>
            <person name="Rajan J."/>
            <person name="Raymond C."/>
            <person name="Rouse G."/>
            <person name="Saenphimmachak C."/>
            <person name="Sehra H.K."/>
            <person name="Sheridan E."/>
            <person name="Shownkeen R."/>
            <person name="Sims S."/>
            <person name="Skuce C.D."/>
            <person name="Smith M."/>
            <person name="Steward C."/>
            <person name="Subramanian S."/>
            <person name="Sycamore N."/>
            <person name="Tracey A."/>
            <person name="Tromans A."/>
            <person name="Van Helmond Z."/>
            <person name="Wall M."/>
            <person name="Wallis J.M."/>
            <person name="White S."/>
            <person name="Whitehead S.L."/>
            <person name="Wilkinson J.E."/>
            <person name="Willey D.L."/>
            <person name="Williams H."/>
            <person name="Wilming L."/>
            <person name="Wray P.W."/>
            <person name="Wu Z."/>
            <person name="Coulson A."/>
            <person name="Vaudin M."/>
            <person name="Sulston J.E."/>
            <person name="Durbin R.M."/>
            <person name="Hubbard T."/>
            <person name="Wooster R."/>
            <person name="Dunham I."/>
            <person name="Carter N.P."/>
            <person name="McVean G."/>
            <person name="Ross M.T."/>
            <person name="Harrow J."/>
            <person name="Olson M.V."/>
            <person name="Beck S."/>
            <person name="Rogers J."/>
            <person name="Bentley D.R."/>
        </authorList>
    </citation>
    <scope>NUCLEOTIDE SEQUENCE [LARGE SCALE GENOMIC DNA]</scope>
</reference>
<reference key="2">
    <citation type="journal article" date="2004" name="Genome Res.">
        <title>The status, quality, and expansion of the NIH full-length cDNA project: the Mammalian Gene Collection (MGC).</title>
        <authorList>
            <consortium name="The MGC Project Team"/>
        </authorList>
    </citation>
    <scope>NUCLEOTIDE SEQUENCE [LARGE SCALE MRNA]</scope>
    <scope>VARIANT ARG-27</scope>
    <source>
        <tissue>Eye</tissue>
    </source>
</reference>
<reference key="3">
    <citation type="journal article" date="2013" name="Cell">
        <title>Trnp1 regulates expansion and folding of the mammalian cerebral cortex by control of radial glial fate.</title>
        <authorList>
            <person name="Stahl R."/>
            <person name="Walcher T."/>
            <person name="De Juan Romero C."/>
            <person name="Pilz G.A."/>
            <person name="Cappello S."/>
            <person name="Irmler M."/>
            <person name="Sanz-Aquela J.M."/>
            <person name="Beckers J."/>
            <person name="Blum R."/>
            <person name="Borrell V."/>
            <person name="Goetz M."/>
        </authorList>
    </citation>
    <scope>DEVELOPMENTAL STAGE</scope>
</reference>